<keyword id="KW-0963">Cytoplasm</keyword>
<keyword id="KW-0251">Elongation factor</keyword>
<keyword id="KW-0648">Protein biosynthesis</keyword>
<keyword id="KW-1185">Reference proteome</keyword>
<protein>
    <recommendedName>
        <fullName evidence="1">Elongation factor Ts</fullName>
        <shortName evidence="1">EF-Ts</shortName>
    </recommendedName>
</protein>
<comment type="function">
    <text evidence="1">Associates with the EF-Tu.GDP complex and induces the exchange of GDP to GTP. It remains bound to the aminoacyl-tRNA.EF-Tu.GTP complex up to the GTP hydrolysis stage on the ribosome.</text>
</comment>
<comment type="subcellular location">
    <subcellularLocation>
        <location evidence="1">Cytoplasm</location>
    </subcellularLocation>
</comment>
<comment type="similarity">
    <text evidence="1">Belongs to the EF-Ts family.</text>
</comment>
<comment type="sequence caution" evidence="2">
    <conflict type="erroneous initiation">
        <sequence resource="EMBL-CDS" id="AAU27793"/>
    </conflict>
</comment>
<name>EFTS_LEGPH</name>
<accession>Q5ZUS9</accession>
<evidence type="ECO:0000255" key="1">
    <source>
        <dbReference type="HAMAP-Rule" id="MF_00050"/>
    </source>
</evidence>
<evidence type="ECO:0000305" key="2"/>
<sequence length="292" mass="32112">MSTISAALVMQLRERTGAGMMECKKFLIATNGDIEQAIIEMRKAGQAKADKKADRVAAEGIIVIARSSDERTAVMLEINSETDFVARDENFTNFANAVADVALTSLPKNIEDLSNQALSSGATVEQARQELVAKIGENIKLRRLEKMHCDGVIGYYLHGSRIGVMVALKNGSEALAKDIAMHVAASKPMVVSRDQVPAEAIENEREIFTAQAKESGKPQEIIDKMIDGRINKFIDEVSLLGQPYVKDPNIKVGQLLKEKNAEVISFVRYEVGEGIEKKEDNFVEEVMAQVRT</sequence>
<gene>
    <name evidence="1" type="primary">tsf</name>
    <name type="ordered locus">lpg1713</name>
</gene>
<organism>
    <name type="scientific">Legionella pneumophila subsp. pneumophila (strain Philadelphia 1 / ATCC 33152 / DSM 7513)</name>
    <dbReference type="NCBI Taxonomy" id="272624"/>
    <lineage>
        <taxon>Bacteria</taxon>
        <taxon>Pseudomonadati</taxon>
        <taxon>Pseudomonadota</taxon>
        <taxon>Gammaproteobacteria</taxon>
        <taxon>Legionellales</taxon>
        <taxon>Legionellaceae</taxon>
        <taxon>Legionella</taxon>
    </lineage>
</organism>
<feature type="chain" id="PRO_0000161138" description="Elongation factor Ts">
    <location>
        <begin position="1"/>
        <end position="292"/>
    </location>
</feature>
<feature type="region of interest" description="Involved in Mg(2+) ion dislocation from EF-Tu" evidence="1">
    <location>
        <begin position="82"/>
        <end position="85"/>
    </location>
</feature>
<proteinExistence type="inferred from homology"/>
<dbReference type="EMBL" id="AE017354">
    <property type="protein sequence ID" value="AAU27793.1"/>
    <property type="status" value="ALT_INIT"/>
    <property type="molecule type" value="Genomic_DNA"/>
</dbReference>
<dbReference type="RefSeq" id="WP_010947440.1">
    <property type="nucleotide sequence ID" value="NC_002942.5"/>
</dbReference>
<dbReference type="RefSeq" id="YP_095740.2">
    <property type="nucleotide sequence ID" value="NC_002942.5"/>
</dbReference>
<dbReference type="SMR" id="Q5ZUS9"/>
<dbReference type="STRING" id="272624.lpg1713"/>
<dbReference type="PaxDb" id="272624-lpg1713"/>
<dbReference type="GeneID" id="57035702"/>
<dbReference type="KEGG" id="lpn:lpg1713"/>
<dbReference type="PATRIC" id="fig|272624.6.peg.1794"/>
<dbReference type="eggNOG" id="COG0264">
    <property type="taxonomic scope" value="Bacteria"/>
</dbReference>
<dbReference type="HOGENOM" id="CLU_047155_0_2_6"/>
<dbReference type="OrthoDB" id="9808348at2"/>
<dbReference type="Proteomes" id="UP000000609">
    <property type="component" value="Chromosome"/>
</dbReference>
<dbReference type="GO" id="GO:0005737">
    <property type="term" value="C:cytoplasm"/>
    <property type="evidence" value="ECO:0007669"/>
    <property type="project" value="UniProtKB-SubCell"/>
</dbReference>
<dbReference type="GO" id="GO:0003746">
    <property type="term" value="F:translation elongation factor activity"/>
    <property type="evidence" value="ECO:0007669"/>
    <property type="project" value="UniProtKB-UniRule"/>
</dbReference>
<dbReference type="CDD" id="cd14275">
    <property type="entry name" value="UBA_EF-Ts"/>
    <property type="match status" value="1"/>
</dbReference>
<dbReference type="FunFam" id="1.10.286.20:FF:000001">
    <property type="entry name" value="Elongation factor Ts"/>
    <property type="match status" value="1"/>
</dbReference>
<dbReference type="FunFam" id="1.10.8.10:FF:000001">
    <property type="entry name" value="Elongation factor Ts"/>
    <property type="match status" value="1"/>
</dbReference>
<dbReference type="Gene3D" id="1.10.286.20">
    <property type="match status" value="1"/>
</dbReference>
<dbReference type="Gene3D" id="1.10.8.10">
    <property type="entry name" value="DNA helicase RuvA subunit, C-terminal domain"/>
    <property type="match status" value="1"/>
</dbReference>
<dbReference type="Gene3D" id="3.30.479.20">
    <property type="entry name" value="Elongation factor Ts, dimerisation domain"/>
    <property type="match status" value="2"/>
</dbReference>
<dbReference type="HAMAP" id="MF_00050">
    <property type="entry name" value="EF_Ts"/>
    <property type="match status" value="1"/>
</dbReference>
<dbReference type="InterPro" id="IPR036402">
    <property type="entry name" value="EF-Ts_dimer_sf"/>
</dbReference>
<dbReference type="InterPro" id="IPR001816">
    <property type="entry name" value="Transl_elong_EFTs/EF1B"/>
</dbReference>
<dbReference type="InterPro" id="IPR014039">
    <property type="entry name" value="Transl_elong_EFTs/EF1B_dimer"/>
</dbReference>
<dbReference type="InterPro" id="IPR018101">
    <property type="entry name" value="Transl_elong_Ts_CS"/>
</dbReference>
<dbReference type="InterPro" id="IPR009060">
    <property type="entry name" value="UBA-like_sf"/>
</dbReference>
<dbReference type="NCBIfam" id="TIGR00116">
    <property type="entry name" value="tsf"/>
    <property type="match status" value="1"/>
</dbReference>
<dbReference type="PANTHER" id="PTHR11741">
    <property type="entry name" value="ELONGATION FACTOR TS"/>
    <property type="match status" value="1"/>
</dbReference>
<dbReference type="PANTHER" id="PTHR11741:SF0">
    <property type="entry name" value="ELONGATION FACTOR TS, MITOCHONDRIAL"/>
    <property type="match status" value="1"/>
</dbReference>
<dbReference type="Pfam" id="PF00889">
    <property type="entry name" value="EF_TS"/>
    <property type="match status" value="1"/>
</dbReference>
<dbReference type="SUPFAM" id="SSF54713">
    <property type="entry name" value="Elongation factor Ts (EF-Ts), dimerisation domain"/>
    <property type="match status" value="2"/>
</dbReference>
<dbReference type="SUPFAM" id="SSF46934">
    <property type="entry name" value="UBA-like"/>
    <property type="match status" value="1"/>
</dbReference>
<dbReference type="PROSITE" id="PS01127">
    <property type="entry name" value="EF_TS_2"/>
    <property type="match status" value="1"/>
</dbReference>
<reference key="1">
    <citation type="journal article" date="2004" name="Science">
        <title>The genomic sequence of the accidental pathogen Legionella pneumophila.</title>
        <authorList>
            <person name="Chien M."/>
            <person name="Morozova I."/>
            <person name="Shi S."/>
            <person name="Sheng H."/>
            <person name="Chen J."/>
            <person name="Gomez S.M."/>
            <person name="Asamani G."/>
            <person name="Hill K."/>
            <person name="Nuara J."/>
            <person name="Feder M."/>
            <person name="Rineer J."/>
            <person name="Greenberg J.J."/>
            <person name="Steshenko V."/>
            <person name="Park S.H."/>
            <person name="Zhao B."/>
            <person name="Teplitskaya E."/>
            <person name="Edwards J.R."/>
            <person name="Pampou S."/>
            <person name="Georghiou A."/>
            <person name="Chou I.-C."/>
            <person name="Iannuccilli W."/>
            <person name="Ulz M.E."/>
            <person name="Kim D.H."/>
            <person name="Geringer-Sameth A."/>
            <person name="Goldsberry C."/>
            <person name="Morozov P."/>
            <person name="Fischer S.G."/>
            <person name="Segal G."/>
            <person name="Qu X."/>
            <person name="Rzhetsky A."/>
            <person name="Zhang P."/>
            <person name="Cayanis E."/>
            <person name="De Jong P.J."/>
            <person name="Ju J."/>
            <person name="Kalachikov S."/>
            <person name="Shuman H.A."/>
            <person name="Russo J.J."/>
        </authorList>
    </citation>
    <scope>NUCLEOTIDE SEQUENCE [LARGE SCALE GENOMIC DNA]</scope>
    <source>
        <strain>Philadelphia 1 / ATCC 33152 / DSM 7513</strain>
    </source>
</reference>